<protein>
    <recommendedName>
        <fullName evidence="2">D-alanine--D-alanine ligase</fullName>
        <ecNumber evidence="2">6.3.2.4</ecNumber>
    </recommendedName>
    <alternativeName>
        <fullName evidence="2">D-Ala-D-Ala ligase</fullName>
    </alternativeName>
    <alternativeName>
        <fullName evidence="2">D-alanylalanine synthetase</fullName>
    </alternativeName>
</protein>
<proteinExistence type="inferred from homology"/>
<feature type="chain" id="PRO_0000341103" description="D-alanine--D-alanine ligase">
    <location>
        <begin position="1"/>
        <end position="310"/>
    </location>
</feature>
<feature type="domain" description="ATP-grasp" evidence="2">
    <location>
        <begin position="107"/>
        <end position="302"/>
    </location>
</feature>
<feature type="binding site" evidence="2">
    <location>
        <begin position="135"/>
        <end position="188"/>
    </location>
    <ligand>
        <name>ATP</name>
        <dbReference type="ChEBI" id="CHEBI:30616"/>
    </ligand>
</feature>
<feature type="binding site" evidence="2">
    <location>
        <position position="256"/>
    </location>
    <ligand>
        <name>Mg(2+)</name>
        <dbReference type="ChEBI" id="CHEBI:18420"/>
        <label>1</label>
    </ligand>
</feature>
<feature type="binding site" evidence="2">
    <location>
        <position position="269"/>
    </location>
    <ligand>
        <name>Mg(2+)</name>
        <dbReference type="ChEBI" id="CHEBI:18420"/>
        <label>1</label>
    </ligand>
</feature>
<feature type="binding site" evidence="2">
    <location>
        <position position="269"/>
    </location>
    <ligand>
        <name>Mg(2+)</name>
        <dbReference type="ChEBI" id="CHEBI:18420"/>
        <label>2</label>
    </ligand>
</feature>
<feature type="binding site" evidence="2">
    <location>
        <position position="271"/>
    </location>
    <ligand>
        <name>Mg(2+)</name>
        <dbReference type="ChEBI" id="CHEBI:18420"/>
        <label>2</label>
    </ligand>
</feature>
<organism>
    <name type="scientific">Geotalea uraniireducens (strain Rf4)</name>
    <name type="common">Geobacter uraniireducens</name>
    <dbReference type="NCBI Taxonomy" id="351605"/>
    <lineage>
        <taxon>Bacteria</taxon>
        <taxon>Pseudomonadati</taxon>
        <taxon>Thermodesulfobacteriota</taxon>
        <taxon>Desulfuromonadia</taxon>
        <taxon>Geobacterales</taxon>
        <taxon>Geobacteraceae</taxon>
        <taxon>Geotalea</taxon>
    </lineage>
</organism>
<keyword id="KW-0067">ATP-binding</keyword>
<keyword id="KW-0133">Cell shape</keyword>
<keyword id="KW-0961">Cell wall biogenesis/degradation</keyword>
<keyword id="KW-0963">Cytoplasm</keyword>
<keyword id="KW-0436">Ligase</keyword>
<keyword id="KW-0460">Magnesium</keyword>
<keyword id="KW-0464">Manganese</keyword>
<keyword id="KW-0479">Metal-binding</keyword>
<keyword id="KW-0547">Nucleotide-binding</keyword>
<keyword id="KW-0573">Peptidoglycan synthesis</keyword>
<keyword id="KW-1185">Reference proteome</keyword>
<sequence>MTVDELKTKKIGVLMGGLSAEREVSLKSGAAVHQALLARGYDAVAIDVDRDIAQVLVREWVDVAFIALHGRYGEDGAIQGLLEIMGIPYTGSGVLASALAMNKIFAKQAFQAARLTVAPYKVFCRGDKAALAELEFSLPVVVKPSQEGSSVGVSIVKKESEFAAAMKEAFRYDREILVEQFIKGSEVQVGILEDKALGAIEIVPKNEFYDFDAKYSPGMAEHILPARLPAELYRKVLRAGEDAHRALGCSGYSRVDFLVTEEGACYILEVNTLPGMTDLSLLPEIARGSGIGFEDLVERILAAAALKISQ</sequence>
<accession>A5G8J7</accession>
<dbReference type="EC" id="6.3.2.4" evidence="2"/>
<dbReference type="EMBL" id="CP000698">
    <property type="protein sequence ID" value="ABQ28115.1"/>
    <property type="molecule type" value="Genomic_DNA"/>
</dbReference>
<dbReference type="RefSeq" id="WP_011940752.1">
    <property type="nucleotide sequence ID" value="NC_009483.1"/>
</dbReference>
<dbReference type="SMR" id="A5G8J7"/>
<dbReference type="STRING" id="351605.Gura_3971"/>
<dbReference type="KEGG" id="gur:Gura_3971"/>
<dbReference type="HOGENOM" id="CLU_039268_2_0_7"/>
<dbReference type="UniPathway" id="UPA00219"/>
<dbReference type="Proteomes" id="UP000006695">
    <property type="component" value="Chromosome"/>
</dbReference>
<dbReference type="GO" id="GO:0005737">
    <property type="term" value="C:cytoplasm"/>
    <property type="evidence" value="ECO:0007669"/>
    <property type="project" value="UniProtKB-SubCell"/>
</dbReference>
<dbReference type="GO" id="GO:0005524">
    <property type="term" value="F:ATP binding"/>
    <property type="evidence" value="ECO:0007669"/>
    <property type="project" value="UniProtKB-KW"/>
</dbReference>
<dbReference type="GO" id="GO:0008716">
    <property type="term" value="F:D-alanine-D-alanine ligase activity"/>
    <property type="evidence" value="ECO:0007669"/>
    <property type="project" value="UniProtKB-UniRule"/>
</dbReference>
<dbReference type="GO" id="GO:0046872">
    <property type="term" value="F:metal ion binding"/>
    <property type="evidence" value="ECO:0007669"/>
    <property type="project" value="UniProtKB-KW"/>
</dbReference>
<dbReference type="GO" id="GO:0071555">
    <property type="term" value="P:cell wall organization"/>
    <property type="evidence" value="ECO:0007669"/>
    <property type="project" value="UniProtKB-KW"/>
</dbReference>
<dbReference type="GO" id="GO:0009252">
    <property type="term" value="P:peptidoglycan biosynthetic process"/>
    <property type="evidence" value="ECO:0007669"/>
    <property type="project" value="UniProtKB-UniRule"/>
</dbReference>
<dbReference type="GO" id="GO:0008360">
    <property type="term" value="P:regulation of cell shape"/>
    <property type="evidence" value="ECO:0007669"/>
    <property type="project" value="UniProtKB-KW"/>
</dbReference>
<dbReference type="FunFam" id="3.30.1490.20:FF:000007">
    <property type="entry name" value="D-alanine--D-alanine ligase"/>
    <property type="match status" value="1"/>
</dbReference>
<dbReference type="FunFam" id="3.30.470.20:FF:000008">
    <property type="entry name" value="D-alanine--D-alanine ligase"/>
    <property type="match status" value="1"/>
</dbReference>
<dbReference type="Gene3D" id="3.40.50.20">
    <property type="match status" value="1"/>
</dbReference>
<dbReference type="Gene3D" id="3.30.1490.20">
    <property type="entry name" value="ATP-grasp fold, A domain"/>
    <property type="match status" value="1"/>
</dbReference>
<dbReference type="Gene3D" id="3.30.470.20">
    <property type="entry name" value="ATP-grasp fold, B domain"/>
    <property type="match status" value="1"/>
</dbReference>
<dbReference type="HAMAP" id="MF_00047">
    <property type="entry name" value="Dala_Dala_lig"/>
    <property type="match status" value="1"/>
</dbReference>
<dbReference type="InterPro" id="IPR011761">
    <property type="entry name" value="ATP-grasp"/>
</dbReference>
<dbReference type="InterPro" id="IPR013815">
    <property type="entry name" value="ATP_grasp_subdomain_1"/>
</dbReference>
<dbReference type="InterPro" id="IPR000291">
    <property type="entry name" value="D-Ala_lig_Van_CS"/>
</dbReference>
<dbReference type="InterPro" id="IPR005905">
    <property type="entry name" value="D_ala_D_ala"/>
</dbReference>
<dbReference type="InterPro" id="IPR011095">
    <property type="entry name" value="Dala_Dala_lig_C"/>
</dbReference>
<dbReference type="InterPro" id="IPR011127">
    <property type="entry name" value="Dala_Dala_lig_N"/>
</dbReference>
<dbReference type="InterPro" id="IPR016185">
    <property type="entry name" value="PreATP-grasp_dom_sf"/>
</dbReference>
<dbReference type="NCBIfam" id="TIGR01205">
    <property type="entry name" value="D_ala_D_alaTIGR"/>
    <property type="match status" value="1"/>
</dbReference>
<dbReference type="NCBIfam" id="NF002378">
    <property type="entry name" value="PRK01372.1"/>
    <property type="match status" value="1"/>
</dbReference>
<dbReference type="NCBIfam" id="NF002528">
    <property type="entry name" value="PRK01966.1-4"/>
    <property type="match status" value="1"/>
</dbReference>
<dbReference type="PANTHER" id="PTHR23132">
    <property type="entry name" value="D-ALANINE--D-ALANINE LIGASE"/>
    <property type="match status" value="1"/>
</dbReference>
<dbReference type="PANTHER" id="PTHR23132:SF23">
    <property type="entry name" value="D-ALANINE--D-ALANINE LIGASE B"/>
    <property type="match status" value="1"/>
</dbReference>
<dbReference type="Pfam" id="PF07478">
    <property type="entry name" value="Dala_Dala_lig_C"/>
    <property type="match status" value="1"/>
</dbReference>
<dbReference type="Pfam" id="PF01820">
    <property type="entry name" value="Dala_Dala_lig_N"/>
    <property type="match status" value="1"/>
</dbReference>
<dbReference type="PIRSF" id="PIRSF039102">
    <property type="entry name" value="Ddl/VanB"/>
    <property type="match status" value="1"/>
</dbReference>
<dbReference type="SUPFAM" id="SSF56059">
    <property type="entry name" value="Glutathione synthetase ATP-binding domain-like"/>
    <property type="match status" value="1"/>
</dbReference>
<dbReference type="SUPFAM" id="SSF52440">
    <property type="entry name" value="PreATP-grasp domain"/>
    <property type="match status" value="1"/>
</dbReference>
<dbReference type="PROSITE" id="PS50975">
    <property type="entry name" value="ATP_GRASP"/>
    <property type="match status" value="1"/>
</dbReference>
<dbReference type="PROSITE" id="PS00843">
    <property type="entry name" value="DALA_DALA_LIGASE_1"/>
    <property type="match status" value="1"/>
</dbReference>
<dbReference type="PROSITE" id="PS00844">
    <property type="entry name" value="DALA_DALA_LIGASE_2"/>
    <property type="match status" value="1"/>
</dbReference>
<gene>
    <name evidence="2" type="primary">ddl</name>
    <name type="ordered locus">Gura_3971</name>
</gene>
<comment type="function">
    <text evidence="2">Cell wall formation.</text>
</comment>
<comment type="catalytic activity">
    <reaction evidence="2">
        <text>2 D-alanine + ATP = D-alanyl-D-alanine + ADP + phosphate + H(+)</text>
        <dbReference type="Rhea" id="RHEA:11224"/>
        <dbReference type="ChEBI" id="CHEBI:15378"/>
        <dbReference type="ChEBI" id="CHEBI:30616"/>
        <dbReference type="ChEBI" id="CHEBI:43474"/>
        <dbReference type="ChEBI" id="CHEBI:57416"/>
        <dbReference type="ChEBI" id="CHEBI:57822"/>
        <dbReference type="ChEBI" id="CHEBI:456216"/>
        <dbReference type="EC" id="6.3.2.4"/>
    </reaction>
</comment>
<comment type="cofactor">
    <cofactor evidence="1">
        <name>Mg(2+)</name>
        <dbReference type="ChEBI" id="CHEBI:18420"/>
    </cofactor>
    <cofactor evidence="1">
        <name>Mn(2+)</name>
        <dbReference type="ChEBI" id="CHEBI:29035"/>
    </cofactor>
    <text evidence="1">Binds 2 magnesium or manganese ions per subunit.</text>
</comment>
<comment type="pathway">
    <text evidence="2">Cell wall biogenesis; peptidoglycan biosynthesis.</text>
</comment>
<comment type="subcellular location">
    <subcellularLocation>
        <location evidence="2">Cytoplasm</location>
    </subcellularLocation>
</comment>
<comment type="similarity">
    <text evidence="2">Belongs to the D-alanine--D-alanine ligase family.</text>
</comment>
<reference key="1">
    <citation type="submission" date="2007-05" db="EMBL/GenBank/DDBJ databases">
        <title>Complete sequence of Geobacter uraniireducens Rf4.</title>
        <authorList>
            <consortium name="US DOE Joint Genome Institute"/>
            <person name="Copeland A."/>
            <person name="Lucas S."/>
            <person name="Lapidus A."/>
            <person name="Barry K."/>
            <person name="Detter J.C."/>
            <person name="Glavina del Rio T."/>
            <person name="Hammon N."/>
            <person name="Israni S."/>
            <person name="Dalin E."/>
            <person name="Tice H."/>
            <person name="Pitluck S."/>
            <person name="Chertkov O."/>
            <person name="Brettin T."/>
            <person name="Bruce D."/>
            <person name="Han C."/>
            <person name="Schmutz J."/>
            <person name="Larimer F."/>
            <person name="Land M."/>
            <person name="Hauser L."/>
            <person name="Kyrpides N."/>
            <person name="Mikhailova N."/>
            <person name="Shelobolina E."/>
            <person name="Aklujkar M."/>
            <person name="Lovley D."/>
            <person name="Richardson P."/>
        </authorList>
    </citation>
    <scope>NUCLEOTIDE SEQUENCE [LARGE SCALE GENOMIC DNA]</scope>
    <source>
        <strain>ATCC BAA-1134 / JCM 13001 / Rf4</strain>
    </source>
</reference>
<name>DDL_GEOUR</name>
<evidence type="ECO:0000250" key="1"/>
<evidence type="ECO:0000255" key="2">
    <source>
        <dbReference type="HAMAP-Rule" id="MF_00047"/>
    </source>
</evidence>